<feature type="chain" id="PRO_0000449014" description="Monooxygenase AgnL5">
    <location>
        <begin position="1"/>
        <end position="161"/>
    </location>
</feature>
<name>AGN5_PAEDI</name>
<accession>A0A411PQL6</accession>
<proteinExistence type="inferred from homology"/>
<protein>
    <recommendedName>
        <fullName evidence="2">Monooxygenase AgnL5</fullName>
        <ecNumber evidence="4">1.-.-.-</ecNumber>
    </recommendedName>
    <alternativeName>
        <fullName evidence="2">Agnestins biosynthesis cluster protein L5</fullName>
    </alternativeName>
</protein>
<gene>
    <name evidence="2" type="primary">AgnL5</name>
</gene>
<comment type="function">
    <text evidence="1">Monooxygenase; part of the gene cluster that mediates the biosynthesis of agnestins, dihydroxy-xanthone metabolites (PubMed:30746079). The pathway begins with the assembly and cyclization of atrochrysone thioester by the non-reducing polyketide synthase Agnpks1 (PubMed:30746079). The atrochrysone carboxyl ACP thioesterase AgnL7 then breaks the thioester bond and releases the atrochrysone carboxylic acid as the first enzyme-free intermediate (PubMed:30746079). The decarboxylase AgnL1 then catalyzes the concerted decarboxylation-elimination required to convert atochrysone carboxylic acid into emodin anthrone, which is further oxidized to emodin by the anthrone oxygenase AgnL2 (PubMed:30746079). Emodin then undergoes reduction catalyzed by the oxidoreductase AgnL4 to yield the dihydroquinone tautomer which is the substrate for reduction by the short chain dehydrogenase AgnL6 reduction to produce hydroxyketone, followed by AgnL8 dehydration and likely spontaneous autoxidation to chrysophanol (PubMed:30746079). Baeyer-Villiger oxidation by the oxidase AgnL3 leads to monodictyphenone via cleavage of the C-10/C-10a bond of chrysophanol (PubMed:30746079). Alternative cleavage at the C-4a/C-10 bond of chrysophanol also leads to the formation some cephalone F (PubMed:30746079). Further conversion to agnestins A and B, requires reduction to dihydro-monodictyphenone, oxidation to agnestin C probably via an epoxide, and rearrangement to either agnestin A or agnestin B directly, although agnestin A or agnestin B can also interconvert (PubMed:30746079). Within the cluster, AgnR1 is the only unassigned oxidoreductase present which could be involved in this conversion. However, AgnR1 seems not to be involved in this step, and thus genes involved in the proposed oxidation/reduction may be located elsewhere on the genome (PubMed:30746079). Further agnestin A derivatives are probably formed by spontaneous decarboxylations, dehydrations and methanolysis reactions (PubMed:30746079).</text>
</comment>
<comment type="pathway">
    <text evidence="4">Secondary metabolite biosynthesis.</text>
</comment>
<comment type="similarity">
    <text evidence="3">Belongs to the avfA family.</text>
</comment>
<evidence type="ECO:0000269" key="1">
    <source>
    </source>
</evidence>
<evidence type="ECO:0000303" key="2">
    <source>
    </source>
</evidence>
<evidence type="ECO:0000305" key="3"/>
<evidence type="ECO:0000305" key="4">
    <source>
    </source>
</evidence>
<dbReference type="EC" id="1.-.-.-" evidence="4"/>
<dbReference type="EMBL" id="MH898872">
    <property type="protein sequence ID" value="QBG38883.1"/>
    <property type="molecule type" value="Genomic_DNA"/>
</dbReference>
<dbReference type="SMR" id="A0A411PQL6"/>
<dbReference type="GO" id="GO:0004497">
    <property type="term" value="F:monooxygenase activity"/>
    <property type="evidence" value="ECO:0007669"/>
    <property type="project" value="UniProtKB-KW"/>
</dbReference>
<dbReference type="Gene3D" id="3.10.450.50">
    <property type="match status" value="1"/>
</dbReference>
<dbReference type="InterPro" id="IPR050977">
    <property type="entry name" value="Fungal_Meroterpenoid_Isomerase"/>
</dbReference>
<dbReference type="InterPro" id="IPR032710">
    <property type="entry name" value="NTF2-like_dom_sf"/>
</dbReference>
<dbReference type="PANTHER" id="PTHR39598:SF1">
    <property type="entry name" value="AUSTINOID BIOSYNTHESIS CLUSTERS PROTEIN F-RELATED"/>
    <property type="match status" value="1"/>
</dbReference>
<dbReference type="PANTHER" id="PTHR39598">
    <property type="entry name" value="AUSTINOL SYNTHESIS PROTEIN F-RELATED"/>
    <property type="match status" value="1"/>
</dbReference>
<dbReference type="SUPFAM" id="SSF54427">
    <property type="entry name" value="NTF2-like"/>
    <property type="match status" value="1"/>
</dbReference>
<organism>
    <name type="scientific">Paecilomyces divaricatus</name>
    <name type="common">Penicillium divaricatum</name>
    <dbReference type="NCBI Taxonomy" id="644132"/>
    <lineage>
        <taxon>Eukaryota</taxon>
        <taxon>Fungi</taxon>
        <taxon>Dikarya</taxon>
        <taxon>Ascomycota</taxon>
        <taxon>Pezizomycotina</taxon>
        <taxon>Eurotiomycetes</taxon>
        <taxon>Eurotiomycetidae</taxon>
        <taxon>Eurotiales</taxon>
        <taxon>Thermoascaceae</taxon>
        <taxon>Paecilomyces</taxon>
    </lineage>
</organism>
<keyword id="KW-0503">Monooxygenase</keyword>
<keyword id="KW-0560">Oxidoreductase</keyword>
<reference key="1">
    <citation type="journal article" date="2019" name="Chem. Sci.">
        <title>Characterisation of the biosynthetic pathway to agnestins A and B reveals the reductive route to chrysophanol in fungi.</title>
        <authorList>
            <person name="Szwalbe A.J."/>
            <person name="Williams K."/>
            <person name="Song Z."/>
            <person name="de Mattos-Shipley K."/>
            <person name="Vincent J.L."/>
            <person name="Bailey A.M."/>
            <person name="Willis C.L."/>
            <person name="Cox R.J."/>
            <person name="Simpson T.J."/>
        </authorList>
    </citation>
    <scope>NUCLEOTIDE SEQUENCE [GENOMIC DNA]</scope>
    <scope>FUNCTION</scope>
    <scope>PATHWAY</scope>
    <source>
        <strain>K5013</strain>
    </source>
</reference>
<sequence>MPAPAEVQAATLQRFLAAWQKWDAQEWLDGFADDFTQITLPLSLGIPSRSRAEVEQVLPALVATVKSYQLTIRTVVHDPERNKAAVYALSTGTLPWGPWELEYSVFITFSEAGDQVAVLEEMMDSAFLQEFGPKFGQYLQANGGPRAVAAGVGAGGATAVH</sequence>